<accession>B1JQT7</accession>
<reference key="1">
    <citation type="submission" date="2008-02" db="EMBL/GenBank/DDBJ databases">
        <title>Complete sequence of Yersinia pseudotuberculosis YPIII.</title>
        <authorList>
            <consortium name="US DOE Joint Genome Institute"/>
            <person name="Copeland A."/>
            <person name="Lucas S."/>
            <person name="Lapidus A."/>
            <person name="Glavina del Rio T."/>
            <person name="Dalin E."/>
            <person name="Tice H."/>
            <person name="Bruce D."/>
            <person name="Goodwin L."/>
            <person name="Pitluck S."/>
            <person name="Munk A.C."/>
            <person name="Brettin T."/>
            <person name="Detter J.C."/>
            <person name="Han C."/>
            <person name="Tapia R."/>
            <person name="Schmutz J."/>
            <person name="Larimer F."/>
            <person name="Land M."/>
            <person name="Hauser L."/>
            <person name="Challacombe J.F."/>
            <person name="Green L."/>
            <person name="Lindler L.E."/>
            <person name="Nikolich M.P."/>
            <person name="Richardson P."/>
        </authorList>
    </citation>
    <scope>NUCLEOTIDE SEQUENCE [LARGE SCALE GENOMIC DNA]</scope>
    <source>
        <strain>YPIII</strain>
    </source>
</reference>
<sequence length="60" mass="6820">MDHRLLEIVACPVCNGKLYFNKENLELVCKVDNLAYPVRDGIPVLLENEARPLSIDEKHA</sequence>
<protein>
    <recommendedName>
        <fullName evidence="1">UPF0434 protein YPK_2661</fullName>
    </recommendedName>
</protein>
<gene>
    <name type="ordered locus">YPK_2661</name>
</gene>
<comment type="similarity">
    <text evidence="1">Belongs to the UPF0434 family.</text>
</comment>
<dbReference type="EMBL" id="CP000950">
    <property type="protein sequence ID" value="ACA68938.1"/>
    <property type="molecule type" value="Genomic_DNA"/>
</dbReference>
<dbReference type="RefSeq" id="WP_002211315.1">
    <property type="nucleotide sequence ID" value="NZ_CP009792.1"/>
</dbReference>
<dbReference type="SMR" id="B1JQT7"/>
<dbReference type="KEGG" id="ypy:YPK_2661"/>
<dbReference type="PATRIC" id="fig|502800.11.peg.3360"/>
<dbReference type="GO" id="GO:0005829">
    <property type="term" value="C:cytosol"/>
    <property type="evidence" value="ECO:0007669"/>
    <property type="project" value="TreeGrafter"/>
</dbReference>
<dbReference type="FunFam" id="2.20.25.10:FF:000002">
    <property type="entry name" value="UPF0434 protein YcaR"/>
    <property type="match status" value="1"/>
</dbReference>
<dbReference type="Gene3D" id="2.20.25.10">
    <property type="match status" value="1"/>
</dbReference>
<dbReference type="HAMAP" id="MF_01187">
    <property type="entry name" value="UPF0434"/>
    <property type="match status" value="1"/>
</dbReference>
<dbReference type="InterPro" id="IPR005651">
    <property type="entry name" value="Trm112-like"/>
</dbReference>
<dbReference type="PANTHER" id="PTHR33505:SF4">
    <property type="entry name" value="PROTEIN PREY, MITOCHONDRIAL"/>
    <property type="match status" value="1"/>
</dbReference>
<dbReference type="PANTHER" id="PTHR33505">
    <property type="entry name" value="ZGC:162634"/>
    <property type="match status" value="1"/>
</dbReference>
<dbReference type="Pfam" id="PF03966">
    <property type="entry name" value="Trm112p"/>
    <property type="match status" value="1"/>
</dbReference>
<dbReference type="SUPFAM" id="SSF158997">
    <property type="entry name" value="Trm112p-like"/>
    <property type="match status" value="1"/>
</dbReference>
<organism>
    <name type="scientific">Yersinia pseudotuberculosis serotype O:3 (strain YPIII)</name>
    <dbReference type="NCBI Taxonomy" id="502800"/>
    <lineage>
        <taxon>Bacteria</taxon>
        <taxon>Pseudomonadati</taxon>
        <taxon>Pseudomonadota</taxon>
        <taxon>Gammaproteobacteria</taxon>
        <taxon>Enterobacterales</taxon>
        <taxon>Yersiniaceae</taxon>
        <taxon>Yersinia</taxon>
    </lineage>
</organism>
<feature type="chain" id="PRO_1000138341" description="UPF0434 protein YPK_2661">
    <location>
        <begin position="1"/>
        <end position="60"/>
    </location>
</feature>
<evidence type="ECO:0000255" key="1">
    <source>
        <dbReference type="HAMAP-Rule" id="MF_01187"/>
    </source>
</evidence>
<name>Y2661_YERPY</name>
<proteinExistence type="inferred from homology"/>